<evidence type="ECO:0000255" key="1">
    <source>
        <dbReference type="HAMAP-Rule" id="MF_01310"/>
    </source>
</evidence>
<evidence type="ECO:0000305" key="2"/>
<comment type="function">
    <text evidence="1">Located on the platform of the 30S subunit, it bridges several disparate RNA helices of the 16S rRNA. Forms part of the Shine-Dalgarno cleft in the 70S ribosome.</text>
</comment>
<comment type="subunit">
    <text evidence="1">Part of the 30S ribosomal subunit. Interacts with proteins S7 and S18. Binds to IF-3.</text>
</comment>
<comment type="similarity">
    <text evidence="1">Belongs to the universal ribosomal protein uS11 family.</text>
</comment>
<protein>
    <recommendedName>
        <fullName evidence="1">Small ribosomal subunit protein uS11</fullName>
    </recommendedName>
    <alternativeName>
        <fullName evidence="2">30S ribosomal protein S11</fullName>
    </alternativeName>
</protein>
<dbReference type="EMBL" id="CP000267">
    <property type="protein sequence ID" value="ABD71906.1"/>
    <property type="molecule type" value="Genomic_DNA"/>
</dbReference>
<dbReference type="RefSeq" id="WP_011466464.1">
    <property type="nucleotide sequence ID" value="NC_007908.1"/>
</dbReference>
<dbReference type="SMR" id="Q21QP7"/>
<dbReference type="STRING" id="338969.Rfer_4219"/>
<dbReference type="KEGG" id="rfr:Rfer_4219"/>
<dbReference type="eggNOG" id="COG0100">
    <property type="taxonomic scope" value="Bacteria"/>
</dbReference>
<dbReference type="HOGENOM" id="CLU_072439_5_0_4"/>
<dbReference type="OrthoDB" id="9806415at2"/>
<dbReference type="Proteomes" id="UP000008332">
    <property type="component" value="Chromosome"/>
</dbReference>
<dbReference type="GO" id="GO:1990904">
    <property type="term" value="C:ribonucleoprotein complex"/>
    <property type="evidence" value="ECO:0007669"/>
    <property type="project" value="UniProtKB-KW"/>
</dbReference>
<dbReference type="GO" id="GO:0005840">
    <property type="term" value="C:ribosome"/>
    <property type="evidence" value="ECO:0007669"/>
    <property type="project" value="UniProtKB-KW"/>
</dbReference>
<dbReference type="GO" id="GO:0019843">
    <property type="term" value="F:rRNA binding"/>
    <property type="evidence" value="ECO:0007669"/>
    <property type="project" value="UniProtKB-UniRule"/>
</dbReference>
<dbReference type="GO" id="GO:0003735">
    <property type="term" value="F:structural constituent of ribosome"/>
    <property type="evidence" value="ECO:0007669"/>
    <property type="project" value="InterPro"/>
</dbReference>
<dbReference type="GO" id="GO:0006412">
    <property type="term" value="P:translation"/>
    <property type="evidence" value="ECO:0007669"/>
    <property type="project" value="UniProtKB-UniRule"/>
</dbReference>
<dbReference type="FunFam" id="3.30.420.80:FF:000001">
    <property type="entry name" value="30S ribosomal protein S11"/>
    <property type="match status" value="1"/>
</dbReference>
<dbReference type="Gene3D" id="3.30.420.80">
    <property type="entry name" value="Ribosomal protein S11"/>
    <property type="match status" value="1"/>
</dbReference>
<dbReference type="HAMAP" id="MF_01310">
    <property type="entry name" value="Ribosomal_uS11"/>
    <property type="match status" value="1"/>
</dbReference>
<dbReference type="InterPro" id="IPR001971">
    <property type="entry name" value="Ribosomal_uS11"/>
</dbReference>
<dbReference type="InterPro" id="IPR019981">
    <property type="entry name" value="Ribosomal_uS11_bac-type"/>
</dbReference>
<dbReference type="InterPro" id="IPR018102">
    <property type="entry name" value="Ribosomal_uS11_CS"/>
</dbReference>
<dbReference type="InterPro" id="IPR036967">
    <property type="entry name" value="Ribosomal_uS11_sf"/>
</dbReference>
<dbReference type="NCBIfam" id="NF003698">
    <property type="entry name" value="PRK05309.1"/>
    <property type="match status" value="1"/>
</dbReference>
<dbReference type="NCBIfam" id="TIGR03632">
    <property type="entry name" value="uS11_bact"/>
    <property type="match status" value="1"/>
</dbReference>
<dbReference type="PANTHER" id="PTHR11759">
    <property type="entry name" value="40S RIBOSOMAL PROTEIN S14/30S RIBOSOMAL PROTEIN S11"/>
    <property type="match status" value="1"/>
</dbReference>
<dbReference type="Pfam" id="PF00411">
    <property type="entry name" value="Ribosomal_S11"/>
    <property type="match status" value="1"/>
</dbReference>
<dbReference type="PIRSF" id="PIRSF002131">
    <property type="entry name" value="Ribosomal_S11"/>
    <property type="match status" value="1"/>
</dbReference>
<dbReference type="SUPFAM" id="SSF53137">
    <property type="entry name" value="Translational machinery components"/>
    <property type="match status" value="1"/>
</dbReference>
<dbReference type="PROSITE" id="PS00054">
    <property type="entry name" value="RIBOSOMAL_S11"/>
    <property type="match status" value="1"/>
</dbReference>
<proteinExistence type="inferred from homology"/>
<keyword id="KW-1185">Reference proteome</keyword>
<keyword id="KW-0687">Ribonucleoprotein</keyword>
<keyword id="KW-0689">Ribosomal protein</keyword>
<keyword id="KW-0694">RNA-binding</keyword>
<keyword id="KW-0699">rRNA-binding</keyword>
<accession>Q21QP7</accession>
<name>RS11_ALBFT</name>
<sequence>MAKAPASNAAQRVRKKVRKNVADGIAHVHASFNNTIITITDRQGNALSWASSGGQGFKGSRKSTPFAAQVASEVAGRAAIEQGVKNLDVEIKGPGPGRESSVRALAALGIRINMIADVTPVPHNGCRPQKRRRI</sequence>
<feature type="chain" id="PRO_0000294837" description="Small ribosomal subunit protein uS11">
    <location>
        <begin position="1"/>
        <end position="134"/>
    </location>
</feature>
<organism>
    <name type="scientific">Albidiferax ferrireducens (strain ATCC BAA-621 / DSM 15236 / T118)</name>
    <name type="common">Rhodoferax ferrireducens</name>
    <dbReference type="NCBI Taxonomy" id="338969"/>
    <lineage>
        <taxon>Bacteria</taxon>
        <taxon>Pseudomonadati</taxon>
        <taxon>Pseudomonadota</taxon>
        <taxon>Betaproteobacteria</taxon>
        <taxon>Burkholderiales</taxon>
        <taxon>Comamonadaceae</taxon>
        <taxon>Rhodoferax</taxon>
    </lineage>
</organism>
<reference key="1">
    <citation type="submission" date="2006-02" db="EMBL/GenBank/DDBJ databases">
        <title>Complete sequence of chromosome of Rhodoferax ferrireducens DSM 15236.</title>
        <authorList>
            <person name="Copeland A."/>
            <person name="Lucas S."/>
            <person name="Lapidus A."/>
            <person name="Barry K."/>
            <person name="Detter J.C."/>
            <person name="Glavina del Rio T."/>
            <person name="Hammon N."/>
            <person name="Israni S."/>
            <person name="Pitluck S."/>
            <person name="Brettin T."/>
            <person name="Bruce D."/>
            <person name="Han C."/>
            <person name="Tapia R."/>
            <person name="Gilna P."/>
            <person name="Kiss H."/>
            <person name="Schmutz J."/>
            <person name="Larimer F."/>
            <person name="Land M."/>
            <person name="Kyrpides N."/>
            <person name="Ivanova N."/>
            <person name="Richardson P."/>
        </authorList>
    </citation>
    <scope>NUCLEOTIDE SEQUENCE [LARGE SCALE GENOMIC DNA]</scope>
    <source>
        <strain>ATCC BAA-621 / DSM 15236 / T118</strain>
    </source>
</reference>
<gene>
    <name evidence="1" type="primary">rpsK</name>
    <name type="ordered locus">Rfer_4219</name>
</gene>